<reference key="1">
    <citation type="journal article" date="2009" name="Appl. Environ. Microbiol.">
        <title>Genome analysis of the meat starter culture bacterium Staphylococcus carnosus TM300.</title>
        <authorList>
            <person name="Rosenstein R."/>
            <person name="Nerz C."/>
            <person name="Biswas L."/>
            <person name="Resch A."/>
            <person name="Raddatz G."/>
            <person name="Schuster S.C."/>
            <person name="Goetz F."/>
        </authorList>
    </citation>
    <scope>NUCLEOTIDE SEQUENCE [LARGE SCALE GENOMIC DNA]</scope>
    <source>
        <strain>TM300</strain>
    </source>
</reference>
<protein>
    <recommendedName>
        <fullName evidence="1">Ribosomal protein L11 methyltransferase</fullName>
        <shortName evidence="1">L11 Mtase</shortName>
        <ecNumber evidence="1">2.1.1.-</ecNumber>
    </recommendedName>
</protein>
<comment type="function">
    <text evidence="1">Methylates ribosomal protein L11.</text>
</comment>
<comment type="catalytic activity">
    <reaction evidence="1">
        <text>L-lysyl-[protein] + 3 S-adenosyl-L-methionine = N(6),N(6),N(6)-trimethyl-L-lysyl-[protein] + 3 S-adenosyl-L-homocysteine + 3 H(+)</text>
        <dbReference type="Rhea" id="RHEA:54192"/>
        <dbReference type="Rhea" id="RHEA-COMP:9752"/>
        <dbReference type="Rhea" id="RHEA-COMP:13826"/>
        <dbReference type="ChEBI" id="CHEBI:15378"/>
        <dbReference type="ChEBI" id="CHEBI:29969"/>
        <dbReference type="ChEBI" id="CHEBI:57856"/>
        <dbReference type="ChEBI" id="CHEBI:59789"/>
        <dbReference type="ChEBI" id="CHEBI:61961"/>
    </reaction>
</comment>
<comment type="subcellular location">
    <subcellularLocation>
        <location evidence="1">Cytoplasm</location>
    </subcellularLocation>
</comment>
<comment type="similarity">
    <text evidence="1">Belongs to the methyltransferase superfamily. PrmA family.</text>
</comment>
<dbReference type="EC" id="2.1.1.-" evidence="1"/>
<dbReference type="EMBL" id="AM295250">
    <property type="protein sequence ID" value="CAL28107.1"/>
    <property type="molecule type" value="Genomic_DNA"/>
</dbReference>
<dbReference type="RefSeq" id="WP_015900447.1">
    <property type="nucleotide sequence ID" value="NC_012121.1"/>
</dbReference>
<dbReference type="SMR" id="B9DNJ8"/>
<dbReference type="GeneID" id="93793625"/>
<dbReference type="KEGG" id="sca:SCA_1200"/>
<dbReference type="eggNOG" id="COG2264">
    <property type="taxonomic scope" value="Bacteria"/>
</dbReference>
<dbReference type="HOGENOM" id="CLU_049382_0_1_9"/>
<dbReference type="OrthoDB" id="9785995at2"/>
<dbReference type="BioCyc" id="SCAR396513:SCA_RS06010-MONOMER"/>
<dbReference type="Proteomes" id="UP000000444">
    <property type="component" value="Chromosome"/>
</dbReference>
<dbReference type="GO" id="GO:0005737">
    <property type="term" value="C:cytoplasm"/>
    <property type="evidence" value="ECO:0007669"/>
    <property type="project" value="UniProtKB-SubCell"/>
</dbReference>
<dbReference type="GO" id="GO:0016279">
    <property type="term" value="F:protein-lysine N-methyltransferase activity"/>
    <property type="evidence" value="ECO:0007669"/>
    <property type="project" value="RHEA"/>
</dbReference>
<dbReference type="GO" id="GO:0032259">
    <property type="term" value="P:methylation"/>
    <property type="evidence" value="ECO:0007669"/>
    <property type="project" value="UniProtKB-KW"/>
</dbReference>
<dbReference type="CDD" id="cd02440">
    <property type="entry name" value="AdoMet_MTases"/>
    <property type="match status" value="1"/>
</dbReference>
<dbReference type="Gene3D" id="3.40.50.150">
    <property type="entry name" value="Vaccinia Virus protein VP39"/>
    <property type="match status" value="1"/>
</dbReference>
<dbReference type="HAMAP" id="MF_00735">
    <property type="entry name" value="Methyltr_PrmA"/>
    <property type="match status" value="1"/>
</dbReference>
<dbReference type="InterPro" id="IPR050078">
    <property type="entry name" value="Ribosomal_L11_MeTrfase_PrmA"/>
</dbReference>
<dbReference type="InterPro" id="IPR004498">
    <property type="entry name" value="Ribosomal_PrmA_MeTrfase"/>
</dbReference>
<dbReference type="InterPro" id="IPR029063">
    <property type="entry name" value="SAM-dependent_MTases_sf"/>
</dbReference>
<dbReference type="NCBIfam" id="TIGR00406">
    <property type="entry name" value="prmA"/>
    <property type="match status" value="1"/>
</dbReference>
<dbReference type="PANTHER" id="PTHR43648">
    <property type="entry name" value="ELECTRON TRANSFER FLAVOPROTEIN BETA SUBUNIT LYSINE METHYLTRANSFERASE"/>
    <property type="match status" value="1"/>
</dbReference>
<dbReference type="PANTHER" id="PTHR43648:SF1">
    <property type="entry name" value="ELECTRON TRANSFER FLAVOPROTEIN BETA SUBUNIT LYSINE METHYLTRANSFERASE"/>
    <property type="match status" value="1"/>
</dbReference>
<dbReference type="Pfam" id="PF06325">
    <property type="entry name" value="PrmA"/>
    <property type="match status" value="1"/>
</dbReference>
<dbReference type="PIRSF" id="PIRSF000401">
    <property type="entry name" value="RPL11_MTase"/>
    <property type="match status" value="1"/>
</dbReference>
<dbReference type="SUPFAM" id="SSF53335">
    <property type="entry name" value="S-adenosyl-L-methionine-dependent methyltransferases"/>
    <property type="match status" value="1"/>
</dbReference>
<evidence type="ECO:0000255" key="1">
    <source>
        <dbReference type="HAMAP-Rule" id="MF_00735"/>
    </source>
</evidence>
<keyword id="KW-0963">Cytoplasm</keyword>
<keyword id="KW-0489">Methyltransferase</keyword>
<keyword id="KW-1185">Reference proteome</keyword>
<keyword id="KW-0949">S-adenosyl-L-methionine</keyword>
<keyword id="KW-0808">Transferase</keyword>
<accession>B9DNJ8</accession>
<name>PRMA_STACT</name>
<sequence length="312" mass="35397">MNWMEVSIVINHEVQEFVTSILEENESNGVVIEDSKDLDGELADKFGEIYELDPNDYPDTGVRVKAYFNEIDYSEELKNQLLRNIQELAELDKNIFDYNEQIIKESDWENEWKNYFHPFKASKNFTIVPSWETYQKESDSELCIELDPGMAFGTGDHPTTSMCLNAIEQYVKPSDSVIDVGTGSGILSIACHLLGVRHIKAVDLDELAVRVAKENFEKNSCENAIETTTGNLLKGETNKYDVVIANILAHIIEEMIEDAYNTLNEEGRFITSGIIIEKSDEIIEHMKRVGFNIISINHDNGWACIVGEKVSN</sequence>
<organism>
    <name type="scientific">Staphylococcus carnosus (strain TM300)</name>
    <dbReference type="NCBI Taxonomy" id="396513"/>
    <lineage>
        <taxon>Bacteria</taxon>
        <taxon>Bacillati</taxon>
        <taxon>Bacillota</taxon>
        <taxon>Bacilli</taxon>
        <taxon>Bacillales</taxon>
        <taxon>Staphylococcaceae</taxon>
        <taxon>Staphylococcus</taxon>
    </lineage>
</organism>
<gene>
    <name evidence="1" type="primary">prmA</name>
    <name type="ordered locus">Sca_1200</name>
</gene>
<proteinExistence type="inferred from homology"/>
<feature type="chain" id="PRO_1000148139" description="Ribosomal protein L11 methyltransferase">
    <location>
        <begin position="1"/>
        <end position="312"/>
    </location>
</feature>
<feature type="binding site" evidence="1">
    <location>
        <position position="160"/>
    </location>
    <ligand>
        <name>S-adenosyl-L-methionine</name>
        <dbReference type="ChEBI" id="CHEBI:59789"/>
    </ligand>
</feature>
<feature type="binding site" evidence="1">
    <location>
        <position position="181"/>
    </location>
    <ligand>
        <name>S-adenosyl-L-methionine</name>
        <dbReference type="ChEBI" id="CHEBI:59789"/>
    </ligand>
</feature>
<feature type="binding site" evidence="1">
    <location>
        <position position="203"/>
    </location>
    <ligand>
        <name>S-adenosyl-L-methionine</name>
        <dbReference type="ChEBI" id="CHEBI:59789"/>
    </ligand>
</feature>
<feature type="binding site" evidence="1">
    <location>
        <position position="246"/>
    </location>
    <ligand>
        <name>S-adenosyl-L-methionine</name>
        <dbReference type="ChEBI" id="CHEBI:59789"/>
    </ligand>
</feature>